<name>RS17_PROMH</name>
<accession>B4F1J3</accession>
<sequence>MTDKIRTLQGRVVSDKMEKSVVVAIDRMVKHPLYGKFIRRTTKLHVHDENNECGMGDVVEIRQTRPISKTKSWALVRVVEKAVL</sequence>
<reference key="1">
    <citation type="journal article" date="2008" name="J. Bacteriol.">
        <title>Complete genome sequence of uropathogenic Proteus mirabilis, a master of both adherence and motility.</title>
        <authorList>
            <person name="Pearson M.M."/>
            <person name="Sebaihia M."/>
            <person name="Churcher C."/>
            <person name="Quail M.A."/>
            <person name="Seshasayee A.S."/>
            <person name="Luscombe N.M."/>
            <person name="Abdellah Z."/>
            <person name="Arrosmith C."/>
            <person name="Atkin B."/>
            <person name="Chillingworth T."/>
            <person name="Hauser H."/>
            <person name="Jagels K."/>
            <person name="Moule S."/>
            <person name="Mungall K."/>
            <person name="Norbertczak H."/>
            <person name="Rabbinowitsch E."/>
            <person name="Walker D."/>
            <person name="Whithead S."/>
            <person name="Thomson N.R."/>
            <person name="Rather P.N."/>
            <person name="Parkhill J."/>
            <person name="Mobley H.L.T."/>
        </authorList>
    </citation>
    <scope>NUCLEOTIDE SEQUENCE [LARGE SCALE GENOMIC DNA]</scope>
    <source>
        <strain>HI4320</strain>
    </source>
</reference>
<feature type="chain" id="PRO_1000143286" description="Small ribosomal subunit protein uS17">
    <location>
        <begin position="1"/>
        <end position="84"/>
    </location>
</feature>
<proteinExistence type="inferred from homology"/>
<gene>
    <name evidence="1" type="primary">rpsQ</name>
    <name type="ordered locus">PMI3264</name>
</gene>
<dbReference type="EMBL" id="AM942759">
    <property type="protein sequence ID" value="CAR46396.1"/>
    <property type="molecule type" value="Genomic_DNA"/>
</dbReference>
<dbReference type="RefSeq" id="WP_004246956.1">
    <property type="nucleotide sequence ID" value="NC_010554.1"/>
</dbReference>
<dbReference type="SMR" id="B4F1J3"/>
<dbReference type="EnsemblBacteria" id="CAR46396">
    <property type="protein sequence ID" value="CAR46396"/>
    <property type="gene ID" value="PMI3264"/>
</dbReference>
<dbReference type="GeneID" id="6801684"/>
<dbReference type="KEGG" id="pmr:PMI3264"/>
<dbReference type="eggNOG" id="COG0186">
    <property type="taxonomic scope" value="Bacteria"/>
</dbReference>
<dbReference type="HOGENOM" id="CLU_073626_1_1_6"/>
<dbReference type="Proteomes" id="UP000008319">
    <property type="component" value="Chromosome"/>
</dbReference>
<dbReference type="GO" id="GO:0022627">
    <property type="term" value="C:cytosolic small ribosomal subunit"/>
    <property type="evidence" value="ECO:0007669"/>
    <property type="project" value="TreeGrafter"/>
</dbReference>
<dbReference type="GO" id="GO:0019843">
    <property type="term" value="F:rRNA binding"/>
    <property type="evidence" value="ECO:0007669"/>
    <property type="project" value="UniProtKB-UniRule"/>
</dbReference>
<dbReference type="GO" id="GO:0003735">
    <property type="term" value="F:structural constituent of ribosome"/>
    <property type="evidence" value="ECO:0007669"/>
    <property type="project" value="InterPro"/>
</dbReference>
<dbReference type="GO" id="GO:0006412">
    <property type="term" value="P:translation"/>
    <property type="evidence" value="ECO:0007669"/>
    <property type="project" value="UniProtKB-UniRule"/>
</dbReference>
<dbReference type="CDD" id="cd00364">
    <property type="entry name" value="Ribosomal_uS17"/>
    <property type="match status" value="1"/>
</dbReference>
<dbReference type="FunFam" id="2.40.50.140:FF:000014">
    <property type="entry name" value="30S ribosomal protein S17"/>
    <property type="match status" value="1"/>
</dbReference>
<dbReference type="Gene3D" id="2.40.50.140">
    <property type="entry name" value="Nucleic acid-binding proteins"/>
    <property type="match status" value="1"/>
</dbReference>
<dbReference type="HAMAP" id="MF_01345_B">
    <property type="entry name" value="Ribosomal_uS17_B"/>
    <property type="match status" value="1"/>
</dbReference>
<dbReference type="InterPro" id="IPR012340">
    <property type="entry name" value="NA-bd_OB-fold"/>
</dbReference>
<dbReference type="InterPro" id="IPR000266">
    <property type="entry name" value="Ribosomal_uS17"/>
</dbReference>
<dbReference type="InterPro" id="IPR019984">
    <property type="entry name" value="Ribosomal_uS17_bact/chlr"/>
</dbReference>
<dbReference type="InterPro" id="IPR019979">
    <property type="entry name" value="Ribosomal_uS17_CS"/>
</dbReference>
<dbReference type="NCBIfam" id="NF004123">
    <property type="entry name" value="PRK05610.1"/>
    <property type="match status" value="1"/>
</dbReference>
<dbReference type="NCBIfam" id="TIGR03635">
    <property type="entry name" value="uS17_bact"/>
    <property type="match status" value="1"/>
</dbReference>
<dbReference type="PANTHER" id="PTHR10744">
    <property type="entry name" value="40S RIBOSOMAL PROTEIN S11 FAMILY MEMBER"/>
    <property type="match status" value="1"/>
</dbReference>
<dbReference type="PANTHER" id="PTHR10744:SF1">
    <property type="entry name" value="SMALL RIBOSOMAL SUBUNIT PROTEIN US17M"/>
    <property type="match status" value="1"/>
</dbReference>
<dbReference type="Pfam" id="PF00366">
    <property type="entry name" value="Ribosomal_S17"/>
    <property type="match status" value="1"/>
</dbReference>
<dbReference type="PRINTS" id="PR00973">
    <property type="entry name" value="RIBOSOMALS17"/>
</dbReference>
<dbReference type="SUPFAM" id="SSF50249">
    <property type="entry name" value="Nucleic acid-binding proteins"/>
    <property type="match status" value="1"/>
</dbReference>
<dbReference type="PROSITE" id="PS00056">
    <property type="entry name" value="RIBOSOMAL_S17"/>
    <property type="match status" value="1"/>
</dbReference>
<keyword id="KW-1185">Reference proteome</keyword>
<keyword id="KW-0687">Ribonucleoprotein</keyword>
<keyword id="KW-0689">Ribosomal protein</keyword>
<keyword id="KW-0694">RNA-binding</keyword>
<keyword id="KW-0699">rRNA-binding</keyword>
<protein>
    <recommendedName>
        <fullName evidence="1">Small ribosomal subunit protein uS17</fullName>
    </recommendedName>
    <alternativeName>
        <fullName evidence="2">30S ribosomal protein S17</fullName>
    </alternativeName>
</protein>
<comment type="function">
    <text evidence="1">One of the primary rRNA binding proteins, it binds specifically to the 5'-end of 16S ribosomal RNA.</text>
</comment>
<comment type="subunit">
    <text evidence="1">Part of the 30S ribosomal subunit.</text>
</comment>
<comment type="similarity">
    <text evidence="1">Belongs to the universal ribosomal protein uS17 family.</text>
</comment>
<evidence type="ECO:0000255" key="1">
    <source>
        <dbReference type="HAMAP-Rule" id="MF_01345"/>
    </source>
</evidence>
<evidence type="ECO:0000305" key="2"/>
<organism>
    <name type="scientific">Proteus mirabilis (strain HI4320)</name>
    <dbReference type="NCBI Taxonomy" id="529507"/>
    <lineage>
        <taxon>Bacteria</taxon>
        <taxon>Pseudomonadati</taxon>
        <taxon>Pseudomonadota</taxon>
        <taxon>Gammaproteobacteria</taxon>
        <taxon>Enterobacterales</taxon>
        <taxon>Morganellaceae</taxon>
        <taxon>Proteus</taxon>
    </lineage>
</organism>